<protein>
    <recommendedName>
        <fullName>Homeobox protein Nkx-2.1</fullName>
    </recommendedName>
    <alternativeName>
        <fullName>Homeobox protein NK-2 homolog A</fullName>
    </alternativeName>
    <alternativeName>
        <fullName>Thyroid nuclear factor 1</fullName>
    </alternativeName>
    <alternativeName>
        <fullName>Thyroid transcription factor 1</fullName>
        <shortName>TTF-1</shortName>
    </alternativeName>
    <alternativeName>
        <fullName>Thyroid-specific enhancer-binding protein</fullName>
        <shortName>T/EBP</shortName>
    </alternativeName>
</protein>
<organism>
    <name type="scientific">Homo sapiens</name>
    <name type="common">Human</name>
    <dbReference type="NCBI Taxonomy" id="9606"/>
    <lineage>
        <taxon>Eukaryota</taxon>
        <taxon>Metazoa</taxon>
        <taxon>Chordata</taxon>
        <taxon>Craniata</taxon>
        <taxon>Vertebrata</taxon>
        <taxon>Euteleostomi</taxon>
        <taxon>Mammalia</taxon>
        <taxon>Eutheria</taxon>
        <taxon>Euarchontoglires</taxon>
        <taxon>Primates</taxon>
        <taxon>Haplorrhini</taxon>
        <taxon>Catarrhini</taxon>
        <taxon>Hominidae</taxon>
        <taxon>Homo</taxon>
    </lineage>
</organism>
<keyword id="KW-0010">Activator</keyword>
<keyword id="KW-0025">Alternative splicing</keyword>
<keyword id="KW-0090">Biological rhythms</keyword>
<keyword id="KW-0984">Congenital hypothyroidism</keyword>
<keyword id="KW-0225">Disease variant</keyword>
<keyword id="KW-0238">DNA-binding</keyword>
<keyword id="KW-0371">Homeobox</keyword>
<keyword id="KW-0539">Nucleus</keyword>
<keyword id="KW-0597">Phosphoprotein</keyword>
<keyword id="KW-1267">Proteomics identification</keyword>
<keyword id="KW-1185">Reference proteome</keyword>
<keyword id="KW-0678">Repressor</keyword>
<keyword id="KW-0804">Transcription</keyword>
<keyword id="KW-0805">Transcription regulation</keyword>
<accession>P43699</accession>
<accession>D3DSA3</accession>
<accession>O14954</accession>
<accession>O14955</accession>
<accession>Q7KZF6</accession>
<accession>Q9BRJ8</accession>
<name>NKX21_HUMAN</name>
<sequence length="371" mass="38596">MSMSPKHTTPFSVSDILSPLEESYKKVGMEGGGLGAPLAAYRQGQAAPPTAAMQQHAVGHHGAVTAAYHMTAAGVPQLSHSAVGGYCNGNLGNMSELPPYQDTMRNSASGPGWYGANPDPRFPAISRFMGPASGMNMSGMGGLGSLGDVSKNMAPLPSAPRRKRRVLFSQAQVYELERRFKQQKYLSAPEREHLASMIHLTPTQVKIWFQNHRYKMKRQAKDKAAQQQLQQDSGGGGGGGGTGCPQQQQAQQQSPRRVAVPVLVKDGKPCQAGAPAPGAASLQGHAQQQAQHQAQAAQAAAAAISVGSGGAGLGAHPGHQPGSAGQSPDLAHHAASPAALQGQVSSLSHLNSSGSDYGTMSCSTLLYGRTW</sequence>
<gene>
    <name evidence="20" type="primary">NKX2-1</name>
    <name type="synonym">NKX2A</name>
    <name type="synonym">TITF1</name>
    <name type="synonym">TTF1</name>
</gene>
<evidence type="ECO:0000250" key="1"/>
<evidence type="ECO:0000250" key="2">
    <source>
        <dbReference type="UniProtKB" id="P23441"/>
    </source>
</evidence>
<evidence type="ECO:0000250" key="3">
    <source>
        <dbReference type="UniProtKB" id="P50220"/>
    </source>
</evidence>
<evidence type="ECO:0000255" key="4">
    <source>
        <dbReference type="PROSITE-ProRule" id="PRU00108"/>
    </source>
</evidence>
<evidence type="ECO:0000256" key="5">
    <source>
        <dbReference type="SAM" id="MobiDB-lite"/>
    </source>
</evidence>
<evidence type="ECO:0000269" key="6">
    <source>
    </source>
</evidence>
<evidence type="ECO:0000269" key="7">
    <source>
    </source>
</evidence>
<evidence type="ECO:0000269" key="8">
    <source>
    </source>
</evidence>
<evidence type="ECO:0000269" key="9">
    <source>
    </source>
</evidence>
<evidence type="ECO:0000269" key="10">
    <source>
    </source>
</evidence>
<evidence type="ECO:0000269" key="11">
    <source>
    </source>
</evidence>
<evidence type="ECO:0000269" key="12">
    <source>
    </source>
</evidence>
<evidence type="ECO:0000269" key="13">
    <source>
    </source>
</evidence>
<evidence type="ECO:0000269" key="14">
    <source>
    </source>
</evidence>
<evidence type="ECO:0000269" key="15">
    <source>
    </source>
</evidence>
<evidence type="ECO:0000303" key="16">
    <source>
    </source>
</evidence>
<evidence type="ECO:0000303" key="17">
    <source>
    </source>
</evidence>
<evidence type="ECO:0000303" key="18">
    <source ref="6"/>
</evidence>
<evidence type="ECO:0000305" key="19"/>
<evidence type="ECO:0000312" key="20">
    <source>
        <dbReference type="HGNC" id="HGNC:11825"/>
    </source>
</evidence>
<dbReference type="EMBL" id="U19756">
    <property type="protein sequence ID" value="AAA86099.1"/>
    <property type="molecule type" value="mRNA"/>
</dbReference>
<dbReference type="EMBL" id="X82850">
    <property type="protein sequence ID" value="CAA58053.1"/>
    <property type="molecule type" value="mRNA"/>
</dbReference>
<dbReference type="EMBL" id="U19816">
    <property type="protein sequence ID" value="AAC50125.1"/>
    <property type="molecule type" value="Genomic_DNA"/>
</dbReference>
<dbReference type="EMBL" id="U33749">
    <property type="protein sequence ID" value="AAB52381.1"/>
    <property type="molecule type" value="mRNA"/>
</dbReference>
<dbReference type="EMBL" id="U43203">
    <property type="protein sequence ID" value="AAA89066.1"/>
    <property type="molecule type" value="mRNA"/>
</dbReference>
<dbReference type="EMBL" id="D50739">
    <property type="protein sequence ID" value="BAA23527.1"/>
    <property type="status" value="ALT_SEQ"/>
    <property type="molecule type" value="Genomic_DNA"/>
</dbReference>
<dbReference type="EMBL" id="D50740">
    <property type="protein sequence ID" value="BAA23529.1"/>
    <property type="molecule type" value="mRNA"/>
</dbReference>
<dbReference type="EMBL" id="BT009773">
    <property type="protein sequence ID" value="AAP88775.1"/>
    <property type="molecule type" value="mRNA"/>
</dbReference>
<dbReference type="EMBL" id="AL132857">
    <property type="status" value="NOT_ANNOTATED_CDS"/>
    <property type="molecule type" value="Genomic_DNA"/>
</dbReference>
<dbReference type="EMBL" id="CH471078">
    <property type="protein sequence ID" value="EAW65858.1"/>
    <property type="molecule type" value="Genomic_DNA"/>
</dbReference>
<dbReference type="EMBL" id="CH471078">
    <property type="protein sequence ID" value="EAW65856.1"/>
    <property type="molecule type" value="Genomic_DNA"/>
</dbReference>
<dbReference type="EMBL" id="CH471078">
    <property type="protein sequence ID" value="EAW65859.1"/>
    <property type="molecule type" value="Genomic_DNA"/>
</dbReference>
<dbReference type="EMBL" id="BC006221">
    <property type="protein sequence ID" value="AAH06221.2"/>
    <property type="status" value="ALT_INIT"/>
    <property type="molecule type" value="mRNA"/>
</dbReference>
<dbReference type="CCDS" id="CCDS41945.1">
    <molecule id="P43699-3"/>
</dbReference>
<dbReference type="CCDS" id="CCDS9659.1">
    <molecule id="P43699-1"/>
</dbReference>
<dbReference type="PIR" id="G02321">
    <property type="entry name" value="G02321"/>
</dbReference>
<dbReference type="RefSeq" id="NP_001073136.1">
    <molecule id="P43699-3"/>
    <property type="nucleotide sequence ID" value="NM_001079668.3"/>
</dbReference>
<dbReference type="RefSeq" id="NP_003308.1">
    <molecule id="P43699-1"/>
    <property type="nucleotide sequence ID" value="NM_003317.4"/>
</dbReference>
<dbReference type="BMRB" id="P43699"/>
<dbReference type="SMR" id="P43699"/>
<dbReference type="BioGRID" id="112936">
    <property type="interactions" value="167"/>
</dbReference>
<dbReference type="ComplexPortal" id="CPX-6062">
    <property type="entry name" value="SMAD3-TTF-1 complex"/>
</dbReference>
<dbReference type="FunCoup" id="P43699">
    <property type="interactions" value="1098"/>
</dbReference>
<dbReference type="IntAct" id="P43699">
    <property type="interactions" value="11"/>
</dbReference>
<dbReference type="MINT" id="P43699"/>
<dbReference type="STRING" id="9606.ENSP00000346879"/>
<dbReference type="GlyGen" id="P43699">
    <property type="glycosylation" value="3 sites, 1 O-linked glycan (1 site)"/>
</dbReference>
<dbReference type="iPTMnet" id="P43699"/>
<dbReference type="PhosphoSitePlus" id="P43699"/>
<dbReference type="BioMuta" id="NKX2-1"/>
<dbReference type="DMDM" id="1174819"/>
<dbReference type="jPOST" id="P43699"/>
<dbReference type="MassIVE" id="P43699"/>
<dbReference type="PaxDb" id="9606-ENSP00000346879"/>
<dbReference type="PeptideAtlas" id="P43699"/>
<dbReference type="ProteomicsDB" id="55653">
    <molecule id="P43699-1"/>
</dbReference>
<dbReference type="ProteomicsDB" id="55654">
    <molecule id="P43699-3"/>
</dbReference>
<dbReference type="Antibodypedia" id="3519">
    <property type="antibodies" value="1187 antibodies from 47 providers"/>
</dbReference>
<dbReference type="DNASU" id="7080"/>
<dbReference type="Ensembl" id="ENST00000354822.7">
    <molecule id="P43699-3"/>
    <property type="protein sequence ID" value="ENSP00000346879.6"/>
    <property type="gene ID" value="ENSG00000136352.20"/>
</dbReference>
<dbReference type="Ensembl" id="ENST00000498187.6">
    <molecule id="P43699-1"/>
    <property type="protein sequence ID" value="ENSP00000429607.2"/>
    <property type="gene ID" value="ENSG00000136352.20"/>
</dbReference>
<dbReference type="Ensembl" id="ENST00000518149.5">
    <molecule id="P43699-1"/>
    <property type="protein sequence ID" value="ENSP00000428341.1"/>
    <property type="gene ID" value="ENSG00000136352.20"/>
</dbReference>
<dbReference type="Ensembl" id="ENST00000522719.4">
    <molecule id="P43699-1"/>
    <property type="protein sequence ID" value="ENSP00000429519.4"/>
    <property type="gene ID" value="ENSG00000136352.20"/>
</dbReference>
<dbReference type="GeneID" id="7080"/>
<dbReference type="KEGG" id="hsa:7080"/>
<dbReference type="MANE-Select" id="ENST00000354822.7">
    <molecule id="P43699-3"/>
    <property type="protein sequence ID" value="ENSP00000346879.6"/>
    <property type="RefSeq nucleotide sequence ID" value="NM_001079668.3"/>
    <property type="RefSeq protein sequence ID" value="NP_001073136.1"/>
</dbReference>
<dbReference type="UCSC" id="uc001wtt.4">
    <molecule id="P43699-1"/>
    <property type="organism name" value="human"/>
</dbReference>
<dbReference type="AGR" id="HGNC:11825"/>
<dbReference type="CTD" id="7080"/>
<dbReference type="DisGeNET" id="7080"/>
<dbReference type="GeneCards" id="NKX2-1"/>
<dbReference type="GeneReviews" id="NKX2-1"/>
<dbReference type="HGNC" id="HGNC:11825">
    <property type="gene designation" value="NKX2-1"/>
</dbReference>
<dbReference type="HPA" id="ENSG00000136352">
    <property type="expression patterns" value="Group enriched (lung, thyroid gland)"/>
</dbReference>
<dbReference type="MalaCards" id="NKX2-1"/>
<dbReference type="MIM" id="118700">
    <property type="type" value="phenotype"/>
</dbReference>
<dbReference type="MIM" id="188550">
    <property type="type" value="phenotype"/>
</dbReference>
<dbReference type="MIM" id="600635">
    <property type="type" value="gene"/>
</dbReference>
<dbReference type="MIM" id="610978">
    <property type="type" value="phenotype"/>
</dbReference>
<dbReference type="neXtProt" id="NX_P43699"/>
<dbReference type="OpenTargets" id="ENSG00000136352"/>
<dbReference type="Orphanet" id="95713">
    <property type="disease" value="Athyreosis"/>
</dbReference>
<dbReference type="Orphanet" id="1429">
    <property type="disease" value="Benign hereditary chorea"/>
</dbReference>
<dbReference type="Orphanet" id="209905">
    <property type="disease" value="Brain-lung-thyroid syndrome"/>
</dbReference>
<dbReference type="Orphanet" id="146">
    <property type="disease" value="Differentiated thyroid carcinoma"/>
</dbReference>
<dbReference type="PharmGKB" id="PA36531"/>
<dbReference type="VEuPathDB" id="HostDB:ENSG00000136352"/>
<dbReference type="eggNOG" id="KOG0842">
    <property type="taxonomic scope" value="Eukaryota"/>
</dbReference>
<dbReference type="GeneTree" id="ENSGT00940000161107"/>
<dbReference type="HOGENOM" id="CLU_052416_0_0_1"/>
<dbReference type="InParanoid" id="P43699"/>
<dbReference type="OMA" id="PPYQETM"/>
<dbReference type="OrthoDB" id="3137333at2759"/>
<dbReference type="PAN-GO" id="P43699">
    <property type="GO annotations" value="5 GO annotations based on evolutionary models"/>
</dbReference>
<dbReference type="PhylomeDB" id="P43699"/>
<dbReference type="TreeFam" id="TF351204"/>
<dbReference type="PathwayCommons" id="P43699"/>
<dbReference type="SignaLink" id="P43699"/>
<dbReference type="SIGNOR" id="P43699"/>
<dbReference type="BioGRID-ORCS" id="7080">
    <property type="hits" value="30 hits in 1162 CRISPR screens"/>
</dbReference>
<dbReference type="GeneWiki" id="NK2_homeobox_1"/>
<dbReference type="GenomeRNAi" id="7080"/>
<dbReference type="Pharos" id="P43699">
    <property type="development level" value="Tbio"/>
</dbReference>
<dbReference type="PRO" id="PR:P43699"/>
<dbReference type="Proteomes" id="UP000005640">
    <property type="component" value="Chromosome 14"/>
</dbReference>
<dbReference type="RNAct" id="P43699">
    <property type="molecule type" value="protein"/>
</dbReference>
<dbReference type="Bgee" id="ENSG00000136352">
    <property type="expression patterns" value="Expressed in right lobe of thyroid gland and 82 other cell types or tissues"/>
</dbReference>
<dbReference type="GO" id="GO:0000785">
    <property type="term" value="C:chromatin"/>
    <property type="evidence" value="ECO:0000247"/>
    <property type="project" value="NTNU_SB"/>
</dbReference>
<dbReference type="GO" id="GO:0005654">
    <property type="term" value="C:nucleoplasm"/>
    <property type="evidence" value="ECO:0000250"/>
    <property type="project" value="UniProtKB"/>
</dbReference>
<dbReference type="GO" id="GO:0005634">
    <property type="term" value="C:nucleus"/>
    <property type="evidence" value="ECO:0000314"/>
    <property type="project" value="UniProtKB"/>
</dbReference>
<dbReference type="GO" id="GO:0005667">
    <property type="term" value="C:transcription regulator complex"/>
    <property type="evidence" value="ECO:0000353"/>
    <property type="project" value="ComplexPortal"/>
</dbReference>
<dbReference type="GO" id="GO:0003677">
    <property type="term" value="F:DNA binding"/>
    <property type="evidence" value="ECO:0000315"/>
    <property type="project" value="UniProtKB"/>
</dbReference>
<dbReference type="GO" id="GO:0003700">
    <property type="term" value="F:DNA-binding transcription factor activity"/>
    <property type="evidence" value="ECO:0000314"/>
    <property type="project" value="UniProtKB"/>
</dbReference>
<dbReference type="GO" id="GO:0000981">
    <property type="term" value="F:DNA-binding transcription factor activity, RNA polymerase II-specific"/>
    <property type="evidence" value="ECO:0000247"/>
    <property type="project" value="NTNU_SB"/>
</dbReference>
<dbReference type="GO" id="GO:0019899">
    <property type="term" value="F:enzyme binding"/>
    <property type="evidence" value="ECO:0000353"/>
    <property type="project" value="UniProtKB"/>
</dbReference>
<dbReference type="GO" id="GO:0001161">
    <property type="term" value="F:intronic transcription regulatory region sequence-specific DNA binding"/>
    <property type="evidence" value="ECO:0000314"/>
    <property type="project" value="MGI"/>
</dbReference>
<dbReference type="GO" id="GO:0000978">
    <property type="term" value="F:RNA polymerase II cis-regulatory region sequence-specific DNA binding"/>
    <property type="evidence" value="ECO:0000250"/>
    <property type="project" value="UniProtKB"/>
</dbReference>
<dbReference type="GO" id="GO:0000977">
    <property type="term" value="F:RNA polymerase II transcription regulatory region sequence-specific DNA binding"/>
    <property type="evidence" value="ECO:0000314"/>
    <property type="project" value="MGI"/>
</dbReference>
<dbReference type="GO" id="GO:0061629">
    <property type="term" value="F:RNA polymerase II-specific DNA-binding transcription factor binding"/>
    <property type="evidence" value="ECO:0000353"/>
    <property type="project" value="ARUK-UCL"/>
</dbReference>
<dbReference type="GO" id="GO:0000976">
    <property type="term" value="F:transcription cis-regulatory region binding"/>
    <property type="evidence" value="ECO:0000314"/>
    <property type="project" value="UniProtKB"/>
</dbReference>
<dbReference type="GO" id="GO:0048646">
    <property type="term" value="P:anatomical structure formation involved in morphogenesis"/>
    <property type="evidence" value="ECO:0007669"/>
    <property type="project" value="Ensembl"/>
</dbReference>
<dbReference type="GO" id="GO:0007411">
    <property type="term" value="P:axon guidance"/>
    <property type="evidence" value="ECO:0007669"/>
    <property type="project" value="Ensembl"/>
</dbReference>
<dbReference type="GO" id="GO:0007420">
    <property type="term" value="P:brain development"/>
    <property type="evidence" value="ECO:0000315"/>
    <property type="project" value="UniProtKB"/>
</dbReference>
<dbReference type="GO" id="GO:0030154">
    <property type="term" value="P:cell differentiation"/>
    <property type="evidence" value="ECO:0000318"/>
    <property type="project" value="GO_Central"/>
</dbReference>
<dbReference type="GO" id="GO:0021795">
    <property type="term" value="P:cerebral cortex cell migration"/>
    <property type="evidence" value="ECO:0007669"/>
    <property type="project" value="Ensembl"/>
</dbReference>
<dbReference type="GO" id="GO:0021892">
    <property type="term" value="P:cerebral cortex GABAergic interneuron differentiation"/>
    <property type="evidence" value="ECO:0007669"/>
    <property type="project" value="Ensembl"/>
</dbReference>
<dbReference type="GO" id="GO:0060486">
    <property type="term" value="P:club cell differentiation"/>
    <property type="evidence" value="ECO:0007669"/>
    <property type="project" value="Ensembl"/>
</dbReference>
<dbReference type="GO" id="GO:0031128">
    <property type="term" value="P:developmental induction"/>
    <property type="evidence" value="ECO:0007669"/>
    <property type="project" value="Ensembl"/>
</dbReference>
<dbReference type="GO" id="GO:0007492">
    <property type="term" value="P:endoderm development"/>
    <property type="evidence" value="ECO:0007669"/>
    <property type="project" value="Ensembl"/>
</dbReference>
<dbReference type="GO" id="GO:0060441">
    <property type="term" value="P:epithelial tube branching involved in lung morphogenesis"/>
    <property type="evidence" value="ECO:0000270"/>
    <property type="project" value="UniProtKB"/>
</dbReference>
<dbReference type="GO" id="GO:0030900">
    <property type="term" value="P:forebrain development"/>
    <property type="evidence" value="ECO:0000270"/>
    <property type="project" value="UniProtKB"/>
</dbReference>
<dbReference type="GO" id="GO:0021798">
    <property type="term" value="P:forebrain dorsal/ventral pattern formation"/>
    <property type="evidence" value="ECO:0007669"/>
    <property type="project" value="Ensembl"/>
</dbReference>
<dbReference type="GO" id="GO:0021877">
    <property type="term" value="P:forebrain neuron fate commitment"/>
    <property type="evidence" value="ECO:0007669"/>
    <property type="project" value="Ensembl"/>
</dbReference>
<dbReference type="GO" id="GO:0010467">
    <property type="term" value="P:gene expression"/>
    <property type="evidence" value="ECO:0007669"/>
    <property type="project" value="Ensembl"/>
</dbReference>
<dbReference type="GO" id="GO:0021759">
    <property type="term" value="P:globus pallidus development"/>
    <property type="evidence" value="ECO:0000315"/>
    <property type="project" value="UniProtKB"/>
</dbReference>
<dbReference type="GO" id="GO:0021766">
    <property type="term" value="P:hippocampus development"/>
    <property type="evidence" value="ECO:0007669"/>
    <property type="project" value="Ensembl"/>
</dbReference>
<dbReference type="GO" id="GO:0021854">
    <property type="term" value="P:hypothalamus development"/>
    <property type="evidence" value="ECO:0007669"/>
    <property type="project" value="Ensembl"/>
</dbReference>
<dbReference type="GO" id="GO:1904936">
    <property type="term" value="P:interneuron migration"/>
    <property type="evidence" value="ECO:0007669"/>
    <property type="project" value="Ensembl"/>
</dbReference>
<dbReference type="GO" id="GO:0033327">
    <property type="term" value="P:Leydig cell differentiation"/>
    <property type="evidence" value="ECO:0007669"/>
    <property type="project" value="Ensembl"/>
</dbReference>
<dbReference type="GO" id="GO:0007626">
    <property type="term" value="P:locomotory behavior"/>
    <property type="evidence" value="ECO:0007669"/>
    <property type="project" value="Ensembl"/>
</dbReference>
<dbReference type="GO" id="GO:0030324">
    <property type="term" value="P:lung development"/>
    <property type="evidence" value="ECO:0000270"/>
    <property type="project" value="UniProtKB"/>
</dbReference>
<dbReference type="GO" id="GO:0060430">
    <property type="term" value="P:lung saccule development"/>
    <property type="evidence" value="ECO:0007669"/>
    <property type="project" value="Ensembl"/>
</dbReference>
<dbReference type="GO" id="GO:0030336">
    <property type="term" value="P:negative regulation of cell migration"/>
    <property type="evidence" value="ECO:0000314"/>
    <property type="project" value="UniProtKB"/>
</dbReference>
<dbReference type="GO" id="GO:0045892">
    <property type="term" value="P:negative regulation of DNA-templated transcription"/>
    <property type="evidence" value="ECO:0000250"/>
    <property type="project" value="UniProtKB"/>
</dbReference>
<dbReference type="GO" id="GO:0010719">
    <property type="term" value="P:negative regulation of epithelial to mesenchymal transition"/>
    <property type="evidence" value="ECO:0000314"/>
    <property type="project" value="UniProtKB"/>
</dbReference>
<dbReference type="GO" id="GO:0000122">
    <property type="term" value="P:negative regulation of transcription by RNA polymerase II"/>
    <property type="evidence" value="ECO:0000314"/>
    <property type="project" value="MGI"/>
</dbReference>
<dbReference type="GO" id="GO:0030512">
    <property type="term" value="P:negative regulation of transforming growth factor beta receptor signaling pathway"/>
    <property type="evidence" value="ECO:0000314"/>
    <property type="project" value="UniProtKB"/>
</dbReference>
<dbReference type="GO" id="GO:0048709">
    <property type="term" value="P:oligodendrocyte differentiation"/>
    <property type="evidence" value="ECO:0007669"/>
    <property type="project" value="Ensembl"/>
</dbReference>
<dbReference type="GO" id="GO:0006644">
    <property type="term" value="P:phospholipid metabolic process"/>
    <property type="evidence" value="ECO:0007669"/>
    <property type="project" value="Ensembl"/>
</dbReference>
<dbReference type="GO" id="GO:0021983">
    <property type="term" value="P:pituitary gland development"/>
    <property type="evidence" value="ECO:0007669"/>
    <property type="project" value="Ensembl"/>
</dbReference>
<dbReference type="GO" id="GO:0042753">
    <property type="term" value="P:positive regulation of circadian rhythm"/>
    <property type="evidence" value="ECO:0000250"/>
    <property type="project" value="UniProtKB"/>
</dbReference>
<dbReference type="GO" id="GO:0045893">
    <property type="term" value="P:positive regulation of DNA-templated transcription"/>
    <property type="evidence" value="ECO:0000314"/>
    <property type="project" value="UniProtKB"/>
</dbReference>
<dbReference type="GO" id="GO:0010628">
    <property type="term" value="P:positive regulation of gene expression"/>
    <property type="evidence" value="ECO:0000314"/>
    <property type="project" value="UniProtKB"/>
</dbReference>
<dbReference type="GO" id="GO:0045944">
    <property type="term" value="P:positive regulation of transcription by RNA polymerase II"/>
    <property type="evidence" value="ECO:0000314"/>
    <property type="project" value="UniProtKB"/>
</dbReference>
<dbReference type="GO" id="GO:0006355">
    <property type="term" value="P:regulation of DNA-templated transcription"/>
    <property type="evidence" value="ECO:0000314"/>
    <property type="project" value="ComplexPortal"/>
</dbReference>
<dbReference type="GO" id="GO:0006357">
    <property type="term" value="P:regulation of transcription by RNA polymerase II"/>
    <property type="evidence" value="ECO:0000318"/>
    <property type="project" value="GO_Central"/>
</dbReference>
<dbReference type="GO" id="GO:0009725">
    <property type="term" value="P:response to hormone"/>
    <property type="evidence" value="ECO:0000270"/>
    <property type="project" value="UniProtKB"/>
</dbReference>
<dbReference type="GO" id="GO:0048511">
    <property type="term" value="P:rhythmic process"/>
    <property type="evidence" value="ECO:0007669"/>
    <property type="project" value="UniProtKB-KW"/>
</dbReference>
<dbReference type="GO" id="GO:0030878">
    <property type="term" value="P:thyroid gland development"/>
    <property type="evidence" value="ECO:0000315"/>
    <property type="project" value="UniProtKB"/>
</dbReference>
<dbReference type="GO" id="GO:0060510">
    <property type="term" value="P:type II pneumocyte differentiation"/>
    <property type="evidence" value="ECO:0007669"/>
    <property type="project" value="Ensembl"/>
</dbReference>
<dbReference type="CDD" id="cd00086">
    <property type="entry name" value="homeodomain"/>
    <property type="match status" value="1"/>
</dbReference>
<dbReference type="FunFam" id="1.10.10.60:FF:000108">
    <property type="entry name" value="NK2 homeobox 1"/>
    <property type="match status" value="1"/>
</dbReference>
<dbReference type="Gene3D" id="1.10.10.60">
    <property type="entry name" value="Homeodomain-like"/>
    <property type="match status" value="1"/>
</dbReference>
<dbReference type="InterPro" id="IPR001356">
    <property type="entry name" value="HD"/>
</dbReference>
<dbReference type="InterPro" id="IPR020479">
    <property type="entry name" value="HD_metazoa"/>
</dbReference>
<dbReference type="InterPro" id="IPR017970">
    <property type="entry name" value="Homeobox_CS"/>
</dbReference>
<dbReference type="InterPro" id="IPR050394">
    <property type="entry name" value="Homeobox_NK-like"/>
</dbReference>
<dbReference type="InterPro" id="IPR009057">
    <property type="entry name" value="Homeodomain-like_sf"/>
</dbReference>
<dbReference type="PANTHER" id="PTHR24340">
    <property type="entry name" value="HOMEOBOX PROTEIN NKX"/>
    <property type="match status" value="1"/>
</dbReference>
<dbReference type="PANTHER" id="PTHR24340:SF33">
    <property type="entry name" value="HOMEOBOX PROTEIN NKX-2.1"/>
    <property type="match status" value="1"/>
</dbReference>
<dbReference type="Pfam" id="PF00046">
    <property type="entry name" value="Homeodomain"/>
    <property type="match status" value="1"/>
</dbReference>
<dbReference type="PRINTS" id="PR00024">
    <property type="entry name" value="HOMEOBOX"/>
</dbReference>
<dbReference type="SMART" id="SM00389">
    <property type="entry name" value="HOX"/>
    <property type="match status" value="1"/>
</dbReference>
<dbReference type="SUPFAM" id="SSF46689">
    <property type="entry name" value="Homeodomain-like"/>
    <property type="match status" value="1"/>
</dbReference>
<dbReference type="PROSITE" id="PS00027">
    <property type="entry name" value="HOMEOBOX_1"/>
    <property type="match status" value="1"/>
</dbReference>
<dbReference type="PROSITE" id="PS50071">
    <property type="entry name" value="HOMEOBOX_2"/>
    <property type="match status" value="1"/>
</dbReference>
<comment type="function">
    <text evidence="2 3">Transcription factor that binds and activates the promoter of thyroid specific genes such as thyroglobulin, thyroperoxidase, and thyrotropin receptor. Crucial in the maintenance of the thyroid differentiation phenotype. May play a role in lung development and surfactant homeostasis. Forms a regulatory loop with GRHL2 that coordinates lung epithelial cell morphogenesis and differentiation. Activates the transcription of GNRHR and plays a role in enhancing the circadian oscillation of its gene expression. Represses the transcription of the circadian transcriptional repressor NR1D1 (By similarity).</text>
</comment>
<comment type="subunit">
    <text evidence="11">Interacts with WWTR1.</text>
</comment>
<comment type="interaction">
    <interactant intactId="EBI-1391923">
        <id>P43699</id>
    </interactant>
    <interactant intactId="EBI-1047110">
        <id>Q9P031</id>
        <label>CCDC59</label>
    </interactant>
    <organismsDiffer>false</organismsDiffer>
    <experiments>4</experiments>
</comment>
<comment type="interaction">
    <interactant intactId="EBI-1391923">
        <id>P43699</id>
    </interactant>
    <interactant intactId="EBI-389883">
        <id>P16333</id>
        <label>NCK1</label>
    </interactant>
    <organismsDiffer>false</organismsDiffer>
    <experiments>2</experiments>
</comment>
<comment type="subcellular location">
    <subcellularLocation>
        <location evidence="3">Nucleus</location>
    </subcellularLocation>
</comment>
<comment type="alternative products">
    <event type="alternative splicing"/>
    <isoform>
        <id>P43699-1</id>
        <name>1</name>
        <sequence type="displayed"/>
    </isoform>
    <isoform>
        <id>P43699-3</id>
        <name>3</name>
        <sequence type="described" ref="VSP_037890"/>
    </isoform>
</comment>
<comment type="tissue specificity">
    <text>Thyroid and lung.</text>
</comment>
<comment type="PTM">
    <text evidence="1">Phosphorylated on serine residues by STK3/MST2.</text>
</comment>
<comment type="disease" evidence="8 10 13 15">
    <disease id="DI-01272">
        <name>Chorea, hereditary benign</name>
        <acronym>BHC</acronym>
        <description>A rare autosomal dominant movement disorder, defined by early onset in childhood, a stable or non-progressive course of chorea, and no mental deterioration. Chorea is characterized by involuntary, forcible, rapid, jerky movements that may be subtle or become confluent, markedly altering normal patterns of movement.</description>
        <dbReference type="MIM" id="118700"/>
    </disease>
    <text>The disease is caused by variants affecting the gene represented in this entry.</text>
</comment>
<comment type="disease" evidence="6 7 9 10 14">
    <disease id="DI-01345">
        <name>Choreoathetosis and congenital hypothyroidism with or without pulmonary dysfunction</name>
        <acronym>CAHTP</acronym>
        <description>An autosomal dominant disorder that manifests in infancy with neurological disturbances, hypothyroidism, and respiratory problems. It is characterized by movement abnormalities beginning with muscular hypotonia followed by the development of chorea, athetosis, dystonia, ataxia, and dysarthria.</description>
        <dbReference type="MIM" id="610978"/>
    </disease>
    <text>The disease is caused by variants affecting the gene represented in this entry.</text>
</comment>
<comment type="disease" evidence="12">
    <disease id="DI-02698">
        <name>Thyroid cancer, non-medullary, 1</name>
        <acronym>NMTC1</acronym>
        <description>A form of non-medullary thyroid cancer (NMTC), a cancer characterized by tumors originating from the thyroid follicular cells. NMTCs represent approximately 95% of all cases of thyroid cancer and are classified into papillary, follicular, Hurthle cell, and anaplastic neoplasms.</description>
        <dbReference type="MIM" id="188550"/>
    </disease>
    <text>Disease susceptibility is associated with variants affecting the gene represented in this entry.</text>
</comment>
<comment type="similarity">
    <text evidence="19">Belongs to the NK-2 homeobox family.</text>
</comment>
<comment type="sequence caution" evidence="19">
    <conflict type="erroneous initiation">
        <sequence resource="EMBL-CDS" id="AAH06221"/>
    </conflict>
    <text>Truncated N-terminus.</text>
</comment>
<comment type="sequence caution" evidence="19">
    <conflict type="erroneous gene model prediction">
        <sequence resource="EMBL-CDS" id="BAA23527"/>
    </conflict>
</comment>
<comment type="online information" name="Atlas of Genetics and Cytogenetics in Oncology and Haematology">
    <link uri="https://atlasgeneticsoncology.org/gene/44015/NKX2-1"/>
</comment>
<reference key="1">
    <citation type="journal article" date="1995" name="Biochim. Biophys. Acta">
        <title>The complete nucleotide sequence of the mouse thyroid-specific enhancer-binding protein (T/EBP) gene: extensive identity of the deduced amino acid sequence with the human protein.</title>
        <authorList>
            <person name="Oguchi H."/>
            <person name="Pan Y.-T."/>
            <person name="Kimura S."/>
        </authorList>
    </citation>
    <scope>NUCLEOTIDE SEQUENCE [MRNA] (ISOFORM 1)</scope>
    <source>
        <tissue>Lung</tissue>
    </source>
</reference>
<reference key="2">
    <citation type="journal article" date="1995" name="Biochim. Biophys. Acta">
        <title>Cloning and sequence analysis of human thyroid transcription factor 1.</title>
        <authorList>
            <person name="Saiardi A."/>
            <person name="Tassi V."/>
            <person name="de Filippis V."/>
            <person name="Civitareale D."/>
        </authorList>
    </citation>
    <scope>NUCLEOTIDE SEQUENCE [MRNA] (ISOFORM 1)</scope>
    <source>
        <tissue>Thyroid</tissue>
    </source>
</reference>
<reference key="3">
    <citation type="journal article" date="1995" name="J. Biol. Chem.">
        <title>Gene structure and expression of human thyroid transcription factor-1 in respiratory epithelial cells.</title>
        <authorList>
            <person name="Ikeda K."/>
            <person name="Clark J.C."/>
            <person name="Shaw-White J.R."/>
            <person name="Stahlman M.T."/>
            <person name="Boutell C.J."/>
            <person name="Whitsett J.A."/>
        </authorList>
    </citation>
    <scope>NUCLEOTIDE SEQUENCE [GENOMIC DNA] (ISOFORM 1)</scope>
</reference>
<reference key="4">
    <citation type="journal article" date="1998" name="Biochim. Biophys. Acta">
        <title>Structure of the human Nkx2.1 gene.</title>
        <authorList>
            <person name="Hamdan H."/>
            <person name="Liu H."/>
            <person name="Li C."/>
            <person name="Jones C."/>
            <person name="Lee M."/>
            <person name="deLemos R."/>
            <person name="Minoo P."/>
        </authorList>
    </citation>
    <scope>NUCLEOTIDE SEQUENCE [MRNA] (ISOFORMS 1 AND 3)</scope>
    <source>
        <tissue>Lung</tissue>
    </source>
</reference>
<reference key="5">
    <citation type="submission" date="1995-05" db="EMBL/GenBank/DDBJ databases">
        <title>Cloning of the human TTF-1 gene.</title>
        <authorList>
            <person name="Endo T."/>
            <person name="Ohno M."/>
            <person name="Nakazato M."/>
        </authorList>
    </citation>
    <scope>NUCLEOTIDE SEQUENCE [GENOMIC DNA / MRNA] (ISOFORM 1)</scope>
    <source>
        <tissue>Thyroid</tissue>
    </source>
</reference>
<reference key="6">
    <citation type="submission" date="2003-08" db="EMBL/GenBank/DDBJ databases">
        <title>Cloning of human full-length CDSs in BD Creator(TM) system donor vector.</title>
        <authorList>
            <person name="Kalnine N."/>
            <person name="Chen X."/>
            <person name="Rolfs A."/>
            <person name="Halleck A."/>
            <person name="Hines L."/>
            <person name="Eisenstein S."/>
            <person name="Koundinya M."/>
            <person name="Raphael J."/>
            <person name="Moreira D."/>
            <person name="Kelley T."/>
            <person name="LaBaer J."/>
            <person name="Lin Y."/>
            <person name="Phelan M."/>
            <person name="Farmer A."/>
        </authorList>
    </citation>
    <scope>NUCLEOTIDE SEQUENCE [LARGE SCALE MRNA] (ISOFORM 3)</scope>
</reference>
<reference key="7">
    <citation type="journal article" date="2003" name="Nature">
        <title>The DNA sequence and analysis of human chromosome 14.</title>
        <authorList>
            <person name="Heilig R."/>
            <person name="Eckenberg R."/>
            <person name="Petit J.-L."/>
            <person name="Fonknechten N."/>
            <person name="Da Silva C."/>
            <person name="Cattolico L."/>
            <person name="Levy M."/>
            <person name="Barbe V."/>
            <person name="De Berardinis V."/>
            <person name="Ureta-Vidal A."/>
            <person name="Pelletier E."/>
            <person name="Vico V."/>
            <person name="Anthouard V."/>
            <person name="Rowen L."/>
            <person name="Madan A."/>
            <person name="Qin S."/>
            <person name="Sun H."/>
            <person name="Du H."/>
            <person name="Pepin K."/>
            <person name="Artiguenave F."/>
            <person name="Robert C."/>
            <person name="Cruaud C."/>
            <person name="Bruels T."/>
            <person name="Jaillon O."/>
            <person name="Friedlander L."/>
            <person name="Samson G."/>
            <person name="Brottier P."/>
            <person name="Cure S."/>
            <person name="Segurens B."/>
            <person name="Aniere F."/>
            <person name="Samain S."/>
            <person name="Crespeau H."/>
            <person name="Abbasi N."/>
            <person name="Aiach N."/>
            <person name="Boscus D."/>
            <person name="Dickhoff R."/>
            <person name="Dors M."/>
            <person name="Dubois I."/>
            <person name="Friedman C."/>
            <person name="Gouyvenoux M."/>
            <person name="James R."/>
            <person name="Madan A."/>
            <person name="Mairey-Estrada B."/>
            <person name="Mangenot S."/>
            <person name="Martins N."/>
            <person name="Menard M."/>
            <person name="Oztas S."/>
            <person name="Ratcliffe A."/>
            <person name="Shaffer T."/>
            <person name="Trask B."/>
            <person name="Vacherie B."/>
            <person name="Bellemere C."/>
            <person name="Belser C."/>
            <person name="Besnard-Gonnet M."/>
            <person name="Bartol-Mavel D."/>
            <person name="Boutard M."/>
            <person name="Briez-Silla S."/>
            <person name="Combette S."/>
            <person name="Dufosse-Laurent V."/>
            <person name="Ferron C."/>
            <person name="Lechaplais C."/>
            <person name="Louesse C."/>
            <person name="Muselet D."/>
            <person name="Magdelenat G."/>
            <person name="Pateau E."/>
            <person name="Petit E."/>
            <person name="Sirvain-Trukniewicz P."/>
            <person name="Trybou A."/>
            <person name="Vega-Czarny N."/>
            <person name="Bataille E."/>
            <person name="Bluet E."/>
            <person name="Bordelais I."/>
            <person name="Dubois M."/>
            <person name="Dumont C."/>
            <person name="Guerin T."/>
            <person name="Haffray S."/>
            <person name="Hammadi R."/>
            <person name="Muanga J."/>
            <person name="Pellouin V."/>
            <person name="Robert D."/>
            <person name="Wunderle E."/>
            <person name="Gauguet G."/>
            <person name="Roy A."/>
            <person name="Sainte-Marthe L."/>
            <person name="Verdier J."/>
            <person name="Verdier-Discala C."/>
            <person name="Hillier L.W."/>
            <person name="Fulton L."/>
            <person name="McPherson J."/>
            <person name="Matsuda F."/>
            <person name="Wilson R."/>
            <person name="Scarpelli C."/>
            <person name="Gyapay G."/>
            <person name="Wincker P."/>
            <person name="Saurin W."/>
            <person name="Quetier F."/>
            <person name="Waterston R."/>
            <person name="Hood L."/>
            <person name="Weissenbach J."/>
        </authorList>
    </citation>
    <scope>NUCLEOTIDE SEQUENCE [LARGE SCALE GENOMIC DNA]</scope>
</reference>
<reference key="8">
    <citation type="submission" date="2005-09" db="EMBL/GenBank/DDBJ databases">
        <authorList>
            <person name="Mural R.J."/>
            <person name="Istrail S."/>
            <person name="Sutton G.G."/>
            <person name="Florea L."/>
            <person name="Halpern A.L."/>
            <person name="Mobarry C.M."/>
            <person name="Lippert R."/>
            <person name="Walenz B."/>
            <person name="Shatkay H."/>
            <person name="Dew I."/>
            <person name="Miller J.R."/>
            <person name="Flanigan M.J."/>
            <person name="Edwards N.J."/>
            <person name="Bolanos R."/>
            <person name="Fasulo D."/>
            <person name="Halldorsson B.V."/>
            <person name="Hannenhalli S."/>
            <person name="Turner R."/>
            <person name="Yooseph S."/>
            <person name="Lu F."/>
            <person name="Nusskern D.R."/>
            <person name="Shue B.C."/>
            <person name="Zheng X.H."/>
            <person name="Zhong F."/>
            <person name="Delcher A.L."/>
            <person name="Huson D.H."/>
            <person name="Kravitz S.A."/>
            <person name="Mouchard L."/>
            <person name="Reinert K."/>
            <person name="Remington K.A."/>
            <person name="Clark A.G."/>
            <person name="Waterman M.S."/>
            <person name="Eichler E.E."/>
            <person name="Adams M.D."/>
            <person name="Hunkapiller M.W."/>
            <person name="Myers E.W."/>
            <person name="Venter J.C."/>
        </authorList>
    </citation>
    <scope>NUCLEOTIDE SEQUENCE [LARGE SCALE GENOMIC DNA]</scope>
</reference>
<reference key="9">
    <citation type="journal article" date="2004" name="Genome Res.">
        <title>The status, quality, and expansion of the NIH full-length cDNA project: the Mammalian Gene Collection (MGC).</title>
        <authorList>
            <consortium name="The MGC Project Team"/>
        </authorList>
    </citation>
    <scope>NUCLEOTIDE SEQUENCE [LARGE SCALE MRNA] (ISOFORM 3)</scope>
    <source>
        <tissue>Lung</tissue>
    </source>
</reference>
<reference key="10">
    <citation type="journal article" date="2009" name="Exp. Cell Res.">
        <title>TAZ is a coactivator for Pax8 and TTF-1, two transcription factors involved in thyroid differentiation.</title>
        <authorList>
            <person name="Di Palma T."/>
            <person name="D'Andrea B."/>
            <person name="Liguori G.L."/>
            <person name="Liguoro A."/>
            <person name="de Cristofaro T."/>
            <person name="Del Prete D."/>
            <person name="Pappalardo A."/>
            <person name="Mascia A."/>
            <person name="Zannini M."/>
        </authorList>
    </citation>
    <scope>INTERACTION WITH WWTR1</scope>
</reference>
<reference key="11">
    <citation type="journal article" date="2009" name="J. Natl. Cancer Inst.">
        <title>A germline mutation (A339V) in thyroid transcription factor-1 (TITF-1/NKX2.1) in patients with multinodular goiter and papillary thyroid carcinoma.</title>
        <authorList>
            <person name="Ngan E.S."/>
            <person name="Lang B.H."/>
            <person name="Liu T."/>
            <person name="Shum C.K."/>
            <person name="So M.T."/>
            <person name="Lau D.K."/>
            <person name="Leon T.Y."/>
            <person name="Cherny S.S."/>
            <person name="Tsai S.Y."/>
            <person name="Lo C.Y."/>
            <person name="Khoo U.S."/>
            <person name="Tam P.K."/>
            <person name="Garcia-Barcelo M.M."/>
        </authorList>
    </citation>
    <scope>INVOLVEMENT IN NMTC1</scope>
    <scope>VARIANT NMTC1 VAL-339</scope>
    <scope>CHARACTERIZATION OF VARIANT NMTC1 VAL-339</scope>
</reference>
<reference key="12">
    <citation type="journal article" date="2002" name="Hum. Mol. Genet.">
        <title>Mutations in TITF-1 are associated with benign hereditary chorea.</title>
        <authorList>
            <person name="Breedveld G.J."/>
            <person name="van Dongen J.W.F."/>
            <person name="Danesino C."/>
            <person name="Guala A."/>
            <person name="Percy A.K."/>
            <person name="Dure L.S."/>
            <person name="Harper P."/>
            <person name="Lazarou L.P."/>
            <person name="van der Linde H."/>
            <person name="Joosse M."/>
            <person name="Grueters A."/>
            <person name="MacDonald M.E."/>
            <person name="de Vries B.B.A."/>
            <person name="Arts W.F.M."/>
            <person name="Oostra B.A."/>
            <person name="Krude H."/>
            <person name="Heutink P."/>
        </authorList>
    </citation>
    <scope>VARIANTS BHC LEU-208 AND SER-213</scope>
    <scope>INVOLVEMENT IN BHC</scope>
</reference>
<reference key="13">
    <citation type="journal article" date="2002" name="J. Clin. Invest.">
        <title>Partial deficiency of thyroid transcription factor 1 produces predominantly neurological defects in humans and mice.</title>
        <authorList>
            <person name="Pohlenz J."/>
            <person name="Dumitrescu A."/>
            <person name="Zundel D."/>
            <person name="Martine U."/>
            <person name="Schoenberger W."/>
            <person name="Koo E."/>
            <person name="Weiss R.E."/>
            <person name="Cohen R.N."/>
            <person name="Kimura S."/>
            <person name="Refetoff S."/>
        </authorList>
    </citation>
    <scope>INVOLVEMENT IN CAHTP</scope>
</reference>
<reference key="14">
    <citation type="journal article" date="2002" name="J. Clin. Invest.">
        <title>Choreoathetosis, hypothyroidism, and pulmonary alterations due to human NKX2-1 haploinsufficiency.</title>
        <authorList>
            <person name="Krude H."/>
            <person name="Schuetz B."/>
            <person name="Biebermann H."/>
            <person name="von Moers A."/>
            <person name="Schnabel D."/>
            <person name="Neitzel H."/>
            <person name="Toennies H."/>
            <person name="Weise D."/>
            <person name="Lafferty A."/>
            <person name="Schwarz S."/>
            <person name="DeFelice M."/>
            <person name="von Deimling A."/>
            <person name="van Landeghem F."/>
            <person name="DiLauro R."/>
            <person name="Grueters A."/>
        </authorList>
    </citation>
    <scope>VARIANT CAHTP PHE-205</scope>
</reference>
<reference key="15">
    <citation type="journal article" date="2004" name="J. Pediatr.">
        <title>Autosomal dominant transmission of congenital hypothyroidism, neonatal respiratory distress, and ataxia caused by a mutation of NKX2-1.</title>
        <authorList>
            <person name="Doyle D.A."/>
            <person name="Gonzalez I."/>
            <person name="Thomas B."/>
            <person name="Scavina M."/>
        </authorList>
    </citation>
    <scope>INVOLVEMENT IN CAHTP</scope>
</reference>
<reference key="16">
    <citation type="journal article" date="2005" name="Neurology">
        <title>A novel TITF-1 mutation causes benign hereditary chorea with response to levodopa.</title>
        <authorList>
            <person name="Asmus F."/>
            <person name="Horber V."/>
            <person name="Pohlenz J."/>
            <person name="Schwabe D."/>
            <person name="Zimprich A."/>
            <person name="Munz M."/>
            <person name="Schoening M."/>
            <person name="Gasser T."/>
        </authorList>
    </citation>
    <scope>INVOLVEMENT IN CAHTP AND IN BHC</scope>
</reference>
<reference key="17">
    <citation type="journal article" date="2014" name="J. Child Neurol.">
        <title>A novel mutation of NKX2-1 affecting 2 generations with hypothyroidism and choreoathetosis: part of the spectrum of brain-thyroid-lung syndrome.</title>
        <authorList>
            <person name="Williamson S."/>
            <person name="Kirkpatrick M."/>
            <person name="Greene S."/>
            <person name="Goudie D."/>
        </authorList>
    </citation>
    <scope>VARIANT BHC PRO-179</scope>
</reference>
<reference key="18">
    <citation type="journal article" date="2014" name="J. Med. Genet.">
        <title>Comprehensive genotyping and clinical characterisation reveal 27 novel NKX2-1 mutations and expand the phenotypic spectrum.</title>
        <authorList>
            <person name="Thorwarth A."/>
            <person name="Schnittert-Huebener S."/>
            <person name="Schrumpf P."/>
            <person name="Mueller I."/>
            <person name="Jyrch S."/>
            <person name="Dame C."/>
            <person name="Biebermann H."/>
            <person name="Kleinau G."/>
            <person name="Katchanov J."/>
            <person name="Schuelke M."/>
            <person name="Ebert G."/>
            <person name="Steininger A."/>
            <person name="Boennemann C."/>
            <person name="Brockmann K."/>
            <person name="Christen H.J."/>
            <person name="Crock P."/>
            <person name="deZegher F."/>
            <person name="Griese M."/>
            <person name="Hewitt J."/>
            <person name="Ivarsson S."/>
            <person name="Huebner C."/>
            <person name="Kapelari K."/>
            <person name="Plecko B."/>
            <person name="Rating D."/>
            <person name="Stoeva I."/>
            <person name="Ropers H.H."/>
            <person name="Grueters A."/>
            <person name="Ullmann R."/>
            <person name="Krude H."/>
        </authorList>
    </citation>
    <scope>VARIANTS CAHTP ARG-203 AND PHE-205</scope>
</reference>
<reference key="19">
    <citation type="journal article" date="2016" name="J. Neurol. Sci.">
        <title>Functional characterization of two novel mutations in TTF-1/NKX2.1 homeodomain in patients with benign hereditary chorea.</title>
        <authorList>
            <person name="Provenzano C."/>
            <person name="Zamboni M."/>
            <person name="Veneziano L."/>
            <person name="Mantuano E."/>
            <person name="Garavaglia B."/>
            <person name="Zorzi G."/>
            <person name="Pagonabarraga J."/>
            <person name="Giunti P."/>
            <person name="Civitareale D."/>
        </authorList>
    </citation>
    <scope>VARIANTS BHC HIS-172 AND SER-208</scope>
    <scope>CHARACTERIZATION OF VARIANTS BHC HIS-172 AND SER-208</scope>
</reference>
<feature type="chain" id="PRO_0000049343" description="Homeobox protein Nkx-2.1">
    <location>
        <begin position="1"/>
        <end position="371"/>
    </location>
</feature>
<feature type="DNA-binding region" description="Homeobox" evidence="4">
    <location>
        <begin position="161"/>
        <end position="220"/>
    </location>
</feature>
<feature type="region of interest" description="Disordered" evidence="5">
    <location>
        <begin position="219"/>
        <end position="294"/>
    </location>
</feature>
<feature type="region of interest" description="Disordered" evidence="5">
    <location>
        <begin position="310"/>
        <end position="339"/>
    </location>
</feature>
<feature type="compositionally biased region" description="Gly residues" evidence="5">
    <location>
        <begin position="233"/>
        <end position="243"/>
    </location>
</feature>
<feature type="compositionally biased region" description="Low complexity" evidence="5">
    <location>
        <begin position="244"/>
        <end position="253"/>
    </location>
</feature>
<feature type="compositionally biased region" description="Low complexity" evidence="5">
    <location>
        <begin position="272"/>
        <end position="294"/>
    </location>
</feature>
<feature type="modified residue" description="Phosphoserine" evidence="2">
    <location>
        <position position="254"/>
    </location>
</feature>
<feature type="splice variant" id="VSP_037890" description="In isoform 3." evidence="16 17 18">
    <original>M</original>
    <variation>MWSGGSGKARGWEAAAGGRSSPGRLSRRRIM</variation>
    <location>
        <position position="1"/>
    </location>
</feature>
<feature type="sequence variant" id="VAR_075209" description="In BHC; decrease in DNA-binding; no effect on transcription activation from thyroglobulin/TG, nor from pulmonary surfactant-associated protein C/SFTPC gene promoters." evidence="15">
    <original>Q</original>
    <variation>H</variation>
    <location>
        <position position="172"/>
    </location>
</feature>
<feature type="sequence variant" id="VAR_077542" description="In BHC; uncertain significance." evidence="13">
    <original>R</original>
    <variation>P</variation>
    <location>
        <position position="179"/>
    </location>
</feature>
<feature type="sequence variant" id="VAR_073040" description="In CAHTP." evidence="14">
    <original>T</original>
    <variation>R</variation>
    <location>
        <position position="203"/>
    </location>
</feature>
<feature type="sequence variant" id="VAR_034906" description="In CAHTP; dbSNP:rs137852692." evidence="7 14">
    <original>V</original>
    <variation>F</variation>
    <location>
        <position position="205"/>
    </location>
</feature>
<feature type="sequence variant" id="VAR_015188" description="In BHC; dbSNP:rs28936672." evidence="8">
    <original>W</original>
    <variation>L</variation>
    <location>
        <position position="208"/>
    </location>
</feature>
<feature type="sequence variant" id="VAR_075210" description="In BHC; loss of transcription activation." evidence="15">
    <original>W</original>
    <variation>S</variation>
    <location>
        <position position="208"/>
    </location>
</feature>
<feature type="sequence variant" id="VAR_015189" description="In BHC; dbSNP:rs28936671." evidence="8">
    <original>R</original>
    <variation>S</variation>
    <location>
        <position position="213"/>
    </location>
</feature>
<feature type="sequence variant" id="VAR_075769" description="In NMTC1; loss of transcription regulatory region DNA binding; decreased transcription factor activity, sequence-specific DNA binding; tested for the thyroglobulin gene; results in dominant impairment of thyroid-specific genes transcription and increased thyroid cells proliferation; dbSNP:rs537209983." evidence="12">
    <original>A</original>
    <variation>V</variation>
    <location>
        <position position="339"/>
    </location>
</feature>
<feature type="sequence conflict" description="In Ref. 5; BAA23527/BAA23529." evidence="19" ref="5">
    <original>P</original>
    <variation>H</variation>
    <location>
        <position position="49"/>
    </location>
</feature>
<feature type="sequence conflict" description="In Ref. 5; BAA23527/BAA23529." evidence="19" ref="5">
    <original>H</original>
    <variation>P</variation>
    <location>
        <position position="61"/>
    </location>
</feature>
<feature type="sequence conflict" description="In Ref. 5; BAA23527/BAA23529." evidence="19" ref="5">
    <original>S</original>
    <variation>T</variation>
    <location>
        <position position="158"/>
    </location>
</feature>
<feature type="sequence conflict" description="In Ref. 5; BAA23527/BAA23529." evidence="19" ref="5">
    <original>R</original>
    <variation>G</variation>
    <location>
        <position position="161"/>
    </location>
</feature>
<proteinExistence type="evidence at protein level"/>